<accession>Q0TES5</accession>
<protein>
    <recommendedName>
        <fullName evidence="1">Holo-[acyl-carrier-protein] synthase</fullName>
        <shortName evidence="1">Holo-ACP synthase</shortName>
        <ecNumber evidence="1">2.7.8.7</ecNumber>
    </recommendedName>
    <alternativeName>
        <fullName evidence="1">4'-phosphopantetheinyl transferase AcpS</fullName>
    </alternativeName>
</protein>
<keyword id="KW-0963">Cytoplasm</keyword>
<keyword id="KW-0275">Fatty acid biosynthesis</keyword>
<keyword id="KW-0276">Fatty acid metabolism</keyword>
<keyword id="KW-0444">Lipid biosynthesis</keyword>
<keyword id="KW-0443">Lipid metabolism</keyword>
<keyword id="KW-0460">Magnesium</keyword>
<keyword id="KW-0479">Metal-binding</keyword>
<keyword id="KW-0808">Transferase</keyword>
<comment type="function">
    <text evidence="1">Transfers the 4'-phosphopantetheine moiety from coenzyme A to a Ser of acyl-carrier-protein.</text>
</comment>
<comment type="catalytic activity">
    <reaction evidence="1">
        <text>apo-[ACP] + CoA = holo-[ACP] + adenosine 3',5'-bisphosphate + H(+)</text>
        <dbReference type="Rhea" id="RHEA:12068"/>
        <dbReference type="Rhea" id="RHEA-COMP:9685"/>
        <dbReference type="Rhea" id="RHEA-COMP:9690"/>
        <dbReference type="ChEBI" id="CHEBI:15378"/>
        <dbReference type="ChEBI" id="CHEBI:29999"/>
        <dbReference type="ChEBI" id="CHEBI:57287"/>
        <dbReference type="ChEBI" id="CHEBI:58343"/>
        <dbReference type="ChEBI" id="CHEBI:64479"/>
        <dbReference type="EC" id="2.7.8.7"/>
    </reaction>
</comment>
<comment type="cofactor">
    <cofactor evidence="1">
        <name>Mg(2+)</name>
        <dbReference type="ChEBI" id="CHEBI:18420"/>
    </cofactor>
</comment>
<comment type="subcellular location">
    <subcellularLocation>
        <location evidence="1">Cytoplasm</location>
    </subcellularLocation>
</comment>
<comment type="similarity">
    <text evidence="1">Belongs to the P-Pant transferase superfamily. AcpS family.</text>
</comment>
<dbReference type="EC" id="2.7.8.7" evidence="1"/>
<dbReference type="EMBL" id="CP000247">
    <property type="protein sequence ID" value="ABG70554.1"/>
    <property type="molecule type" value="Genomic_DNA"/>
</dbReference>
<dbReference type="RefSeq" id="WP_000986038.1">
    <property type="nucleotide sequence ID" value="NC_008253.1"/>
</dbReference>
<dbReference type="SMR" id="Q0TES5"/>
<dbReference type="KEGG" id="ecp:ECP_2565"/>
<dbReference type="HOGENOM" id="CLU_089696_3_1_6"/>
<dbReference type="Proteomes" id="UP000009182">
    <property type="component" value="Chromosome"/>
</dbReference>
<dbReference type="GO" id="GO:0005737">
    <property type="term" value="C:cytoplasm"/>
    <property type="evidence" value="ECO:0007669"/>
    <property type="project" value="UniProtKB-SubCell"/>
</dbReference>
<dbReference type="GO" id="GO:0008897">
    <property type="term" value="F:holo-[acyl-carrier-protein] synthase activity"/>
    <property type="evidence" value="ECO:0007669"/>
    <property type="project" value="UniProtKB-UniRule"/>
</dbReference>
<dbReference type="GO" id="GO:0000287">
    <property type="term" value="F:magnesium ion binding"/>
    <property type="evidence" value="ECO:0007669"/>
    <property type="project" value="UniProtKB-UniRule"/>
</dbReference>
<dbReference type="GO" id="GO:0006633">
    <property type="term" value="P:fatty acid biosynthetic process"/>
    <property type="evidence" value="ECO:0007669"/>
    <property type="project" value="UniProtKB-UniRule"/>
</dbReference>
<dbReference type="FunFam" id="3.90.470.20:FF:000001">
    <property type="entry name" value="Holo-[acyl-carrier-protein] synthase"/>
    <property type="match status" value="1"/>
</dbReference>
<dbReference type="Gene3D" id="3.90.470.20">
    <property type="entry name" value="4'-phosphopantetheinyl transferase domain"/>
    <property type="match status" value="1"/>
</dbReference>
<dbReference type="HAMAP" id="MF_00101">
    <property type="entry name" value="AcpS"/>
    <property type="match status" value="1"/>
</dbReference>
<dbReference type="InterPro" id="IPR008278">
    <property type="entry name" value="4-PPantetheinyl_Trfase_dom"/>
</dbReference>
<dbReference type="InterPro" id="IPR037143">
    <property type="entry name" value="4-PPantetheinyl_Trfase_dom_sf"/>
</dbReference>
<dbReference type="InterPro" id="IPR002582">
    <property type="entry name" value="ACPS"/>
</dbReference>
<dbReference type="InterPro" id="IPR004568">
    <property type="entry name" value="Ppantetheine-prot_Trfase_dom"/>
</dbReference>
<dbReference type="NCBIfam" id="TIGR00516">
    <property type="entry name" value="acpS"/>
    <property type="match status" value="1"/>
</dbReference>
<dbReference type="NCBIfam" id="TIGR00556">
    <property type="entry name" value="pantethn_trn"/>
    <property type="match status" value="1"/>
</dbReference>
<dbReference type="Pfam" id="PF01648">
    <property type="entry name" value="ACPS"/>
    <property type="match status" value="1"/>
</dbReference>
<dbReference type="SUPFAM" id="SSF56214">
    <property type="entry name" value="4'-phosphopantetheinyl transferase"/>
    <property type="match status" value="1"/>
</dbReference>
<proteinExistence type="inferred from homology"/>
<evidence type="ECO:0000255" key="1">
    <source>
        <dbReference type="HAMAP-Rule" id="MF_00101"/>
    </source>
</evidence>
<sequence length="126" mass="14152">MAILGLGTDIVEIARIEAVIARSGERLARRVLSDNEWEIWKTHHQPVRFLAKRFAVKEAAAKAFGTGIRNGLAFNQFEVFNDELGKPRLRLWGEALKLAEKLGVVNMHVTLADERHYACATVIIES</sequence>
<reference key="1">
    <citation type="journal article" date="2006" name="Mol. Microbiol.">
        <title>Role of pathogenicity island-associated integrases in the genome plasticity of uropathogenic Escherichia coli strain 536.</title>
        <authorList>
            <person name="Hochhut B."/>
            <person name="Wilde C."/>
            <person name="Balling G."/>
            <person name="Middendorf B."/>
            <person name="Dobrindt U."/>
            <person name="Brzuszkiewicz E."/>
            <person name="Gottschalk G."/>
            <person name="Carniel E."/>
            <person name="Hacker J."/>
        </authorList>
    </citation>
    <scope>NUCLEOTIDE SEQUENCE [LARGE SCALE GENOMIC DNA]</scope>
    <source>
        <strain>536 / UPEC</strain>
    </source>
</reference>
<feature type="chain" id="PRO_1000008421" description="Holo-[acyl-carrier-protein] synthase">
    <location>
        <begin position="1"/>
        <end position="126"/>
    </location>
</feature>
<feature type="binding site" evidence="1">
    <location>
        <position position="9"/>
    </location>
    <ligand>
        <name>Mg(2+)</name>
        <dbReference type="ChEBI" id="CHEBI:18420"/>
    </ligand>
</feature>
<feature type="binding site" evidence="1">
    <location>
        <position position="58"/>
    </location>
    <ligand>
        <name>Mg(2+)</name>
        <dbReference type="ChEBI" id="CHEBI:18420"/>
    </ligand>
</feature>
<organism>
    <name type="scientific">Escherichia coli O6:K15:H31 (strain 536 / UPEC)</name>
    <dbReference type="NCBI Taxonomy" id="362663"/>
    <lineage>
        <taxon>Bacteria</taxon>
        <taxon>Pseudomonadati</taxon>
        <taxon>Pseudomonadota</taxon>
        <taxon>Gammaproteobacteria</taxon>
        <taxon>Enterobacterales</taxon>
        <taxon>Enterobacteriaceae</taxon>
        <taxon>Escherichia</taxon>
    </lineage>
</organism>
<name>ACPS_ECOL5</name>
<gene>
    <name evidence="1" type="primary">acpS</name>
    <name type="ordered locus">ECP_2565</name>
</gene>